<keyword id="KW-0963">Cytoplasm</keyword>
<keyword id="KW-0903">Direct protein sequencing</keyword>
<keyword id="KW-0378">Hydrolase</keyword>
<keyword id="KW-0496">Mitochondrion</keyword>
<keyword id="KW-1267">Proteomics identification</keyword>
<keyword id="KW-1185">Reference proteome</keyword>
<reference key="1">
    <citation type="journal article" date="1999" name="Biochem. J.">
        <title>Identification of two human dimethylarginine dimethylaminohydrolases with distinct tissue distributions and homology with microbial arginine deiminases.</title>
        <authorList>
            <person name="Leiper J.M."/>
            <person name="Santa Maria J."/>
            <person name="Chubb A."/>
            <person name="MacAllister R.J."/>
            <person name="Charles I.G."/>
            <person name="Whitley G.S."/>
            <person name="Vallance P."/>
        </authorList>
    </citation>
    <scope>NUCLEOTIDE SEQUENCE [MRNA]</scope>
    <scope>ORIGINAL FUNCTION</scope>
    <scope>TISSUE SPECIFICITY</scope>
    <scope>BIOPHYSICOCHEMICAL PROPERTIES</scope>
</reference>
<reference key="2">
    <citation type="journal article" date="2000" name="Genome Res.">
        <title>Cloning and functional analysis of cDNAs with open reading frames for 300 previously undefined genes expressed in CD34+ hematopoietic stem/progenitor cells.</title>
        <authorList>
            <person name="Zhang Q.-H."/>
            <person name="Ye M."/>
            <person name="Wu X.-Y."/>
            <person name="Ren S.-X."/>
            <person name="Zhao M."/>
            <person name="Zhao C.-J."/>
            <person name="Fu G."/>
            <person name="Shen Y."/>
            <person name="Fan H.-Y."/>
            <person name="Lu G."/>
            <person name="Zhong M."/>
            <person name="Xu X.-R."/>
            <person name="Han Z.-G."/>
            <person name="Zhang J.-W."/>
            <person name="Tao J."/>
            <person name="Huang Q.-H."/>
            <person name="Zhou J."/>
            <person name="Hu G.-X."/>
            <person name="Gu J."/>
            <person name="Chen S.-J."/>
            <person name="Chen Z."/>
        </authorList>
    </citation>
    <scope>NUCLEOTIDE SEQUENCE [LARGE SCALE MRNA]</scope>
    <source>
        <tissue>Umbilical cord blood</tissue>
    </source>
</reference>
<reference key="3">
    <citation type="journal article" date="1999" name="J. Immunol.">
        <title>Genes encoding three new members of the leukocyte antigen 6 superfamily and a novel member of Ig superfamily, together with genes encoding the regulatory nuclear chloride ion channel protein (hRNCC) and an N omega-N omega-dimethylarginine dimethylaminohydrolase homologue, are found in a 30-kb segment of the MHC class III region.</title>
        <authorList>
            <person name="Ribas G."/>
            <person name="Neville M."/>
            <person name="Wixon J.L."/>
            <person name="Cheng J."/>
            <person name="Campbell R.D."/>
        </authorList>
    </citation>
    <scope>NUCLEOTIDE SEQUENCE [GENOMIC DNA]</scope>
</reference>
<reference key="4">
    <citation type="submission" date="1998-08" db="EMBL/GenBank/DDBJ databases">
        <authorList>
            <person name="Yu L."/>
        </authorList>
    </citation>
    <scope>NUCLEOTIDE SEQUENCE [MRNA]</scope>
</reference>
<reference key="5">
    <citation type="journal article" date="2003" name="Genome Res.">
        <title>Analysis of the gene-dense major histocompatibility complex class III region and its comparison to mouse.</title>
        <authorList>
            <person name="Xie T."/>
            <person name="Rowen L."/>
            <person name="Aguado B."/>
            <person name="Ahearn M.E."/>
            <person name="Madan A."/>
            <person name="Qin S."/>
            <person name="Campbell R.D."/>
            <person name="Hood L."/>
        </authorList>
    </citation>
    <scope>NUCLEOTIDE SEQUENCE [LARGE SCALE GENOMIC DNA]</scope>
</reference>
<reference key="6">
    <citation type="submission" date="1999-09" db="EMBL/GenBank/DDBJ databases">
        <title>Homo sapiens 2,229,817bp genomic DNA of 6p21.3 HLA class I region.</title>
        <authorList>
            <person name="Shiina S."/>
            <person name="Tamiya G."/>
            <person name="Oka A."/>
            <person name="Inoko H."/>
        </authorList>
    </citation>
    <scope>NUCLEOTIDE SEQUENCE [LARGE SCALE GENOMIC DNA]</scope>
</reference>
<reference key="7">
    <citation type="journal article" date="2003" name="Nature">
        <title>The DNA sequence and analysis of human chromosome 6.</title>
        <authorList>
            <person name="Mungall A.J."/>
            <person name="Palmer S.A."/>
            <person name="Sims S.K."/>
            <person name="Edwards C.A."/>
            <person name="Ashurst J.L."/>
            <person name="Wilming L."/>
            <person name="Jones M.C."/>
            <person name="Horton R."/>
            <person name="Hunt S.E."/>
            <person name="Scott C.E."/>
            <person name="Gilbert J.G.R."/>
            <person name="Clamp M.E."/>
            <person name="Bethel G."/>
            <person name="Milne S."/>
            <person name="Ainscough R."/>
            <person name="Almeida J.P."/>
            <person name="Ambrose K.D."/>
            <person name="Andrews T.D."/>
            <person name="Ashwell R.I.S."/>
            <person name="Babbage A.K."/>
            <person name="Bagguley C.L."/>
            <person name="Bailey J."/>
            <person name="Banerjee R."/>
            <person name="Barker D.J."/>
            <person name="Barlow K.F."/>
            <person name="Bates K."/>
            <person name="Beare D.M."/>
            <person name="Beasley H."/>
            <person name="Beasley O."/>
            <person name="Bird C.P."/>
            <person name="Blakey S.E."/>
            <person name="Bray-Allen S."/>
            <person name="Brook J."/>
            <person name="Brown A.J."/>
            <person name="Brown J.Y."/>
            <person name="Burford D.C."/>
            <person name="Burrill W."/>
            <person name="Burton J."/>
            <person name="Carder C."/>
            <person name="Carter N.P."/>
            <person name="Chapman J.C."/>
            <person name="Clark S.Y."/>
            <person name="Clark G."/>
            <person name="Clee C.M."/>
            <person name="Clegg S."/>
            <person name="Cobley V."/>
            <person name="Collier R.E."/>
            <person name="Collins J.E."/>
            <person name="Colman L.K."/>
            <person name="Corby N.R."/>
            <person name="Coville G.J."/>
            <person name="Culley K.M."/>
            <person name="Dhami P."/>
            <person name="Davies J."/>
            <person name="Dunn M."/>
            <person name="Earthrowl M.E."/>
            <person name="Ellington A.E."/>
            <person name="Evans K.A."/>
            <person name="Faulkner L."/>
            <person name="Francis M.D."/>
            <person name="Frankish A."/>
            <person name="Frankland J."/>
            <person name="French L."/>
            <person name="Garner P."/>
            <person name="Garnett J."/>
            <person name="Ghori M.J."/>
            <person name="Gilby L.M."/>
            <person name="Gillson C.J."/>
            <person name="Glithero R.J."/>
            <person name="Grafham D.V."/>
            <person name="Grant M."/>
            <person name="Gribble S."/>
            <person name="Griffiths C."/>
            <person name="Griffiths M.N.D."/>
            <person name="Hall R."/>
            <person name="Halls K.S."/>
            <person name="Hammond S."/>
            <person name="Harley J.L."/>
            <person name="Hart E.A."/>
            <person name="Heath P.D."/>
            <person name="Heathcott R."/>
            <person name="Holmes S.J."/>
            <person name="Howden P.J."/>
            <person name="Howe K.L."/>
            <person name="Howell G.R."/>
            <person name="Huckle E."/>
            <person name="Humphray S.J."/>
            <person name="Humphries M.D."/>
            <person name="Hunt A.R."/>
            <person name="Johnson C.M."/>
            <person name="Joy A.A."/>
            <person name="Kay M."/>
            <person name="Keenan S.J."/>
            <person name="Kimberley A.M."/>
            <person name="King A."/>
            <person name="Laird G.K."/>
            <person name="Langford C."/>
            <person name="Lawlor S."/>
            <person name="Leongamornlert D.A."/>
            <person name="Leversha M."/>
            <person name="Lloyd C.R."/>
            <person name="Lloyd D.M."/>
            <person name="Loveland J.E."/>
            <person name="Lovell J."/>
            <person name="Martin S."/>
            <person name="Mashreghi-Mohammadi M."/>
            <person name="Maslen G.L."/>
            <person name="Matthews L."/>
            <person name="McCann O.T."/>
            <person name="McLaren S.J."/>
            <person name="McLay K."/>
            <person name="McMurray A."/>
            <person name="Moore M.J.F."/>
            <person name="Mullikin J.C."/>
            <person name="Niblett D."/>
            <person name="Nickerson T."/>
            <person name="Novik K.L."/>
            <person name="Oliver K."/>
            <person name="Overton-Larty E.K."/>
            <person name="Parker A."/>
            <person name="Patel R."/>
            <person name="Pearce A.V."/>
            <person name="Peck A.I."/>
            <person name="Phillimore B.J.C.T."/>
            <person name="Phillips S."/>
            <person name="Plumb R.W."/>
            <person name="Porter K.M."/>
            <person name="Ramsey Y."/>
            <person name="Ranby S.A."/>
            <person name="Rice C.M."/>
            <person name="Ross M.T."/>
            <person name="Searle S.M."/>
            <person name="Sehra H.K."/>
            <person name="Sheridan E."/>
            <person name="Skuce C.D."/>
            <person name="Smith S."/>
            <person name="Smith M."/>
            <person name="Spraggon L."/>
            <person name="Squares S.L."/>
            <person name="Steward C.A."/>
            <person name="Sycamore N."/>
            <person name="Tamlyn-Hall G."/>
            <person name="Tester J."/>
            <person name="Theaker A.J."/>
            <person name="Thomas D.W."/>
            <person name="Thorpe A."/>
            <person name="Tracey A."/>
            <person name="Tromans A."/>
            <person name="Tubby B."/>
            <person name="Wall M."/>
            <person name="Wallis J.M."/>
            <person name="West A.P."/>
            <person name="White S.S."/>
            <person name="Whitehead S.L."/>
            <person name="Whittaker H."/>
            <person name="Wild A."/>
            <person name="Willey D.J."/>
            <person name="Wilmer T.E."/>
            <person name="Wood J.M."/>
            <person name="Wray P.W."/>
            <person name="Wyatt J.C."/>
            <person name="Young L."/>
            <person name="Younger R.M."/>
            <person name="Bentley D.R."/>
            <person name="Coulson A."/>
            <person name="Durbin R.M."/>
            <person name="Hubbard T."/>
            <person name="Sulston J.E."/>
            <person name="Dunham I."/>
            <person name="Rogers J."/>
            <person name="Beck S."/>
        </authorList>
    </citation>
    <scope>NUCLEOTIDE SEQUENCE [LARGE SCALE GENOMIC DNA]</scope>
</reference>
<reference key="8">
    <citation type="submission" date="2005-07" db="EMBL/GenBank/DDBJ databases">
        <authorList>
            <person name="Mural R.J."/>
            <person name="Istrail S."/>
            <person name="Sutton G.G."/>
            <person name="Florea L."/>
            <person name="Halpern A.L."/>
            <person name="Mobarry C.M."/>
            <person name="Lippert R."/>
            <person name="Walenz B."/>
            <person name="Shatkay H."/>
            <person name="Dew I."/>
            <person name="Miller J.R."/>
            <person name="Flanigan M.J."/>
            <person name="Edwards N.J."/>
            <person name="Bolanos R."/>
            <person name="Fasulo D."/>
            <person name="Halldorsson B.V."/>
            <person name="Hannenhalli S."/>
            <person name="Turner R."/>
            <person name="Yooseph S."/>
            <person name="Lu F."/>
            <person name="Nusskern D.R."/>
            <person name="Shue B.C."/>
            <person name="Zheng X.H."/>
            <person name="Zhong F."/>
            <person name="Delcher A.L."/>
            <person name="Huson D.H."/>
            <person name="Kravitz S.A."/>
            <person name="Mouchard L."/>
            <person name="Reinert K."/>
            <person name="Remington K.A."/>
            <person name="Clark A.G."/>
            <person name="Waterman M.S."/>
            <person name="Eichler E.E."/>
            <person name="Adams M.D."/>
            <person name="Hunkapiller M.W."/>
            <person name="Myers E.W."/>
            <person name="Venter J.C."/>
        </authorList>
    </citation>
    <scope>NUCLEOTIDE SEQUENCE [LARGE SCALE GENOMIC DNA]</scope>
</reference>
<reference key="9">
    <citation type="journal article" date="2004" name="Genome Res.">
        <title>The status, quality, and expansion of the NIH full-length cDNA project: the Mammalian Gene Collection (MGC).</title>
        <authorList>
            <consortium name="The MGC Project Team"/>
        </authorList>
    </citation>
    <scope>NUCLEOTIDE SEQUENCE [LARGE SCALE MRNA]</scope>
    <source>
        <tissue>Placenta</tissue>
    </source>
</reference>
<reference key="10">
    <citation type="submission" date="2008-12" db="UniProtKB">
        <authorList>
            <person name="Lubec G."/>
            <person name="Vishwanath V."/>
            <person name="Chen W.-Q."/>
            <person name="Sun Y."/>
        </authorList>
    </citation>
    <scope>PROTEIN SEQUENCE OF 18-40; 113-134; 148-173 AND 268-285</scope>
    <scope>IDENTIFICATION BY MASS SPECTROMETRY</scope>
    <source>
        <tissue>Brain</tissue>
        <tissue>Cajal-Retzius cell</tissue>
        <tissue>Fetal brain cortex</tissue>
    </source>
</reference>
<reference key="11">
    <citation type="journal article" date="2011" name="BMC Syst. Biol.">
        <title>Initial characterization of the human central proteome.</title>
        <authorList>
            <person name="Burkard T.R."/>
            <person name="Planyavsky M."/>
            <person name="Kaupe I."/>
            <person name="Breitwieser F.P."/>
            <person name="Buerckstuemmer T."/>
            <person name="Bennett K.L."/>
            <person name="Superti-Furga G."/>
            <person name="Colinge J."/>
        </authorList>
    </citation>
    <scope>IDENTIFICATION BY MASS SPECTROMETRY [LARGE SCALE ANALYSIS]</scope>
</reference>
<reference key="12">
    <citation type="journal article" date="2011" name="Arterioscler. Thromb. Vasc. Biol.">
        <title>Dimethylarginine dimethylaminohydrolase-1 is the critical enzyme for degrading the cardiovascular risk factor asymmetrical dimethylarginine.</title>
        <authorList>
            <person name="Hu X."/>
            <person name="Atzler D."/>
            <person name="Xu X."/>
            <person name="Zhang P."/>
            <person name="Guo H."/>
            <person name="Lu Z."/>
            <person name="Fassett J."/>
            <person name="Schwedhelm E."/>
            <person name="Boeger R.H."/>
            <person name="Bache R.J."/>
            <person name="Chen Y."/>
        </authorList>
    </citation>
    <scope>FUNCTION</scope>
    <scope>CAUTION</scope>
</reference>
<reference key="13">
    <citation type="journal article" date="2012" name="Arthritis Rheum.">
        <title>Dimethylarginine dimethylaminohydrolase 2, a newly identified mitochondrial protein modulating nitric oxide synthesis in normal human chondrocytes.</title>
        <authorList>
            <person name="Cillero-Pastor B."/>
            <person name="Mateos J."/>
            <person name="Fernandez-Lopez C."/>
            <person name="Oreiro N."/>
            <person name="Ruiz-Romero C."/>
            <person name="Blanco F.J."/>
        </authorList>
    </citation>
    <scope>SUBCELLULAR LOCATION</scope>
</reference>
<reference key="14">
    <citation type="journal article" date="2014" name="J. Proteomics">
        <title>An enzyme assisted RP-RPLC approach for in-depth analysis of human liver phosphoproteome.</title>
        <authorList>
            <person name="Bian Y."/>
            <person name="Song C."/>
            <person name="Cheng K."/>
            <person name="Dong M."/>
            <person name="Wang F."/>
            <person name="Huang J."/>
            <person name="Sun D."/>
            <person name="Wang L."/>
            <person name="Ye M."/>
            <person name="Zou H."/>
        </authorList>
    </citation>
    <scope>IDENTIFICATION BY MASS SPECTROMETRY [LARGE SCALE ANALYSIS]</scope>
    <source>
        <tissue>Liver</tissue>
    </source>
</reference>
<reference key="15">
    <citation type="journal article" date="2021" name="Sci. Signal.">
        <title>DDAH2 suppresses RLR-MAVS-mediated innate antiviral immunity by stimulating nitric oxide-activated, Drp1-induced mitochondrial fission.</title>
        <authorList>
            <person name="Huang S."/>
            <person name="Li Z."/>
            <person name="Wu Z."/>
            <person name="Liu C."/>
            <person name="Yu M."/>
            <person name="Wen M."/>
            <person name="Zhang L."/>
            <person name="Wang X."/>
        </authorList>
    </citation>
    <scope>FUNCTION</scope>
    <scope>SUBCELLULAR LOCATION</scope>
    <scope>PHOSPHORYLATION</scope>
    <scope>SUBCELLULAR LOCATION (MICROBIAL INFECTION)</scope>
    <scope>MUTAGENESIS OF SER-68; SER-162; THR-163; THR-183; THR-203; SER-209; THR-211; SER-245 AND SER-253</scope>
</reference>
<reference key="16">
    <citation type="journal article" date="2023" name="Nat. Commun.">
        <title>A multicentric consortium study demonstrates that dimethylarginine dimethylaminohydrolase 2 is not a dimethylarginine dimethylaminohydrolase.</title>
        <authorList>
            <person name="Ragavan V.N."/>
            <person name="Nair P.C."/>
            <person name="Jarzebska N."/>
            <person name="Angom R.S."/>
            <person name="Ruta L."/>
            <person name="Bianconi E."/>
            <person name="Grottelli S."/>
            <person name="Tararova N.D."/>
            <person name="Ryazanskiy D."/>
            <person name="Lentz S.R."/>
            <person name="Tommasi S."/>
            <person name="Martens-Lobenhoffer J."/>
            <person name="Suzuki-Yamamoto T."/>
            <person name="Kimoto M."/>
            <person name="Rubets E."/>
            <person name="Chau S."/>
            <person name="Chen Y."/>
            <person name="Hu X."/>
            <person name="Bernhardt N."/>
            <person name="Spieth P.M."/>
            <person name="Weiss N."/>
            <person name="Bornstein S.R."/>
            <person name="Mukhopadhyay D."/>
            <person name="Bode-Boeger S.M."/>
            <person name="Maas R."/>
            <person name="Wang Y."/>
            <person name="Macchiarulo A."/>
            <person name="Mangoni A.A."/>
            <person name="Cellini B."/>
            <person name="Rodionov R.N."/>
        </authorList>
    </citation>
    <scope>FUNCTION</scope>
    <scope>CAUTION</scope>
</reference>
<organism>
    <name type="scientific">Homo sapiens</name>
    <name type="common">Human</name>
    <dbReference type="NCBI Taxonomy" id="9606"/>
    <lineage>
        <taxon>Eukaryota</taxon>
        <taxon>Metazoa</taxon>
        <taxon>Chordata</taxon>
        <taxon>Craniata</taxon>
        <taxon>Vertebrata</taxon>
        <taxon>Euteleostomi</taxon>
        <taxon>Mammalia</taxon>
        <taxon>Eutheria</taxon>
        <taxon>Euarchontoglires</taxon>
        <taxon>Primates</taxon>
        <taxon>Haplorrhini</taxon>
        <taxon>Catarrhini</taxon>
        <taxon>Hominidae</taxon>
        <taxon>Homo</taxon>
    </lineage>
</organism>
<comment type="function">
    <text evidence="2 4 6 7 9 10 11">Putative hydrolase with unknown substrate (Probable). Does not hydrolyze N(G),N(G)-dimethyl-L-arginine (ADMA) which acts as an inhibitor of NOS (PubMed:21493890, PubMed:37296100). In endothelial cells, induces expression of vascular endothelial growth factor (VEGF) via phosphorylation of the transcription factor SP1 by PKA in a process that is independent of NO and NO synthase (By similarity). Similarly, enhances pancreatic insulin secretion through SP1-mediated transcriptional up-regulation of secretagogin/SCGN, an insulin vesicle docking protein (By similarity). Upon viral infection, relocates to mitochondria where it promotes mitochondrial fission through activation of DNM1L leading to the inhibition of innate response activation mediated by MAVS (PubMed:33850055).</text>
</comment>
<comment type="interaction">
    <interactant intactId="EBI-749139">
        <id>O95865</id>
    </interactant>
    <interactant intactId="EBI-2880652">
        <id>Q08043</id>
        <label>ACTN3</label>
    </interactant>
    <organismsDiffer>false</organismsDiffer>
    <experiments>3</experiments>
</comment>
<comment type="interaction">
    <interactant intactId="EBI-749139">
        <id>O95865</id>
    </interactant>
    <interactant intactId="EBI-2339898">
        <id>Q9NW38</id>
        <label>FANCL</label>
    </interactant>
    <organismsDiffer>false</organismsDiffer>
    <experiments>3</experiments>
</comment>
<comment type="interaction">
    <interactant intactId="EBI-749139">
        <id>O95865</id>
    </interactant>
    <interactant intactId="EBI-749235">
        <id>Q5T013</id>
        <label>HYI</label>
    </interactant>
    <organismsDiffer>false</organismsDiffer>
    <experiments>2</experiments>
</comment>
<comment type="interaction">
    <interactant intactId="EBI-749139">
        <id>O95865</id>
    </interactant>
    <interactant intactId="EBI-11955401">
        <id>Q86VF2-5</id>
        <label>IGFN1</label>
    </interactant>
    <organismsDiffer>false</organismsDiffer>
    <experiments>3</experiments>
</comment>
<comment type="interaction">
    <interactant intactId="EBI-749139">
        <id>O95865</id>
    </interactant>
    <interactant intactId="EBI-12025760">
        <id>Q86UR1-2</id>
        <label>NOXA1</label>
    </interactant>
    <organismsDiffer>false</organismsDiffer>
    <experiments>3</experiments>
</comment>
<comment type="interaction">
    <interactant intactId="EBI-749139">
        <id>O95865</id>
    </interactant>
    <interactant intactId="EBI-1053424">
        <id>O43741</id>
        <label>PRKAB2</label>
    </interactant>
    <organismsDiffer>false</organismsDiffer>
    <experiments>3</experiments>
</comment>
<comment type="interaction">
    <interactant intactId="EBI-749139">
        <id>O95865</id>
    </interactant>
    <interactant intactId="EBI-358993">
        <id>Q15645</id>
        <label>TRIP13</label>
    </interactant>
    <organismsDiffer>false</organismsDiffer>
    <experiments>6</experiments>
</comment>
<comment type="interaction">
    <interactant intactId="EBI-749139">
        <id>O95865</id>
    </interactant>
    <interactant intactId="EBI-25487672">
        <id>PRO_0000037314</id>
        <label>rep</label>
        <dbReference type="UniProtKB" id="P0C6X7"/>
    </interactant>
    <organismsDiffer>true</organismsDiffer>
    <experiments>2</experiments>
</comment>
<comment type="subcellular location">
    <subcellularLocation>
        <location evidence="5 6">Cytoplasm</location>
    </subcellularLocation>
    <subcellularLocation>
        <location evidence="5 6">Mitochondrion</location>
    </subcellularLocation>
    <text>Translocates from cytosol to mitochondrion upon IL1B stimulation in chondrocytes.</text>
</comment>
<comment type="subcellular location">
    <subcellularLocation>
        <location evidence="6">Mitochondrion</location>
    </subcellularLocation>
    <text evidence="6">(Microbial infection) Translocates to the mitochondrion upon Sendai viral infection.</text>
</comment>
<comment type="tissue specificity">
    <text evidence="3">Detected in heart, placenta, lung, liver, skeletal muscle, kidney and pancreas, and at very low levels in brain.</text>
</comment>
<comment type="PTM">
    <text evidence="6">Phosphorylated by TBK1. Phosphorylation inhibits the translocation into the mitochondrion upon Sendai viral infection.</text>
</comment>
<comment type="similarity">
    <text evidence="8">Belongs to the DDAH family.</text>
</comment>
<comment type="caution">
    <text evidence="3 4 7">Was originally thought to be a dimethylarginine dimethylaminohydrolase (with EC:3.5.3.18) able to hydrolyze N(G),N(G)-dimethyl-L-arginine (ADMA) and N(G)-monomethyl-L-arginine (MMA) (PubMed:10493931). However, a recent multicentre study has shown that DDAH2 does not have dimethylarginine dimethylaminohydrolase activity by using different approaches (PubMed:21493890, PubMed:37296100).</text>
</comment>
<dbReference type="EC" id="3.-.-.-" evidence="8"/>
<dbReference type="EMBL" id="AF070667">
    <property type="protein sequence ID" value="AAD20973.1"/>
    <property type="molecule type" value="mRNA"/>
</dbReference>
<dbReference type="EMBL" id="AJ012008">
    <property type="protein sequence ID" value="CAB46079.1"/>
    <property type="molecule type" value="Genomic_DNA"/>
</dbReference>
<dbReference type="EMBL" id="AF087894">
    <property type="protein sequence ID" value="AAP97193.1"/>
    <property type="molecule type" value="mRNA"/>
</dbReference>
<dbReference type="EMBL" id="AF129756">
    <property type="protein sequence ID" value="AAD18074.1"/>
    <property type="molecule type" value="Genomic_DNA"/>
</dbReference>
<dbReference type="EMBL" id="BA000025">
    <property type="protein sequence ID" value="BAB63377.1"/>
    <property type="molecule type" value="Genomic_DNA"/>
</dbReference>
<dbReference type="EMBL" id="AL662899">
    <property type="status" value="NOT_ANNOTATED_CDS"/>
    <property type="molecule type" value="Genomic_DNA"/>
</dbReference>
<dbReference type="EMBL" id="AL670886">
    <property type="status" value="NOT_ANNOTATED_CDS"/>
    <property type="molecule type" value="Genomic_DNA"/>
</dbReference>
<dbReference type="EMBL" id="AL844216">
    <property type="status" value="NOT_ANNOTATED_CDS"/>
    <property type="molecule type" value="Genomic_DNA"/>
</dbReference>
<dbReference type="EMBL" id="BX248244">
    <property type="status" value="NOT_ANNOTATED_CDS"/>
    <property type="molecule type" value="Genomic_DNA"/>
</dbReference>
<dbReference type="EMBL" id="CR354443">
    <property type="status" value="NOT_ANNOTATED_CDS"/>
    <property type="molecule type" value="Genomic_DNA"/>
</dbReference>
<dbReference type="EMBL" id="CR759787">
    <property type="status" value="NOT_ANNOTATED_CDS"/>
    <property type="molecule type" value="Genomic_DNA"/>
</dbReference>
<dbReference type="EMBL" id="CR936239">
    <property type="status" value="NOT_ANNOTATED_CDS"/>
    <property type="molecule type" value="Genomic_DNA"/>
</dbReference>
<dbReference type="EMBL" id="CH471081">
    <property type="protein sequence ID" value="EAX03500.1"/>
    <property type="molecule type" value="Genomic_DNA"/>
</dbReference>
<dbReference type="EMBL" id="BC001435">
    <property type="protein sequence ID" value="AAH01435.1"/>
    <property type="molecule type" value="mRNA"/>
</dbReference>
<dbReference type="CCDS" id="CCDS4718.1"/>
<dbReference type="RefSeq" id="NP_001289936.1">
    <property type="nucleotide sequence ID" value="NM_001303007.2"/>
</dbReference>
<dbReference type="RefSeq" id="NP_001289937.1">
    <property type="nucleotide sequence ID" value="NM_001303008.2"/>
</dbReference>
<dbReference type="RefSeq" id="NP_039268.1">
    <property type="nucleotide sequence ID" value="NM_013974.3"/>
</dbReference>
<dbReference type="RefSeq" id="XP_011512750.1">
    <property type="nucleotide sequence ID" value="XM_011514448.3"/>
</dbReference>
<dbReference type="RefSeq" id="XP_054185725.1">
    <property type="nucleotide sequence ID" value="XM_054329750.1"/>
</dbReference>
<dbReference type="RefSeq" id="XP_054186217.1">
    <property type="nucleotide sequence ID" value="XM_054330242.1"/>
</dbReference>
<dbReference type="RefSeq" id="XP_054186508.1">
    <property type="nucleotide sequence ID" value="XM_054330533.1"/>
</dbReference>
<dbReference type="RefSeq" id="XP_054186760.1">
    <property type="nucleotide sequence ID" value="XM_054330785.1"/>
</dbReference>
<dbReference type="RefSeq" id="XP_054186997.1">
    <property type="nucleotide sequence ID" value="XM_054331022.1"/>
</dbReference>
<dbReference type="RefSeq" id="XP_054187263.1">
    <property type="nucleotide sequence ID" value="XM_054331288.1"/>
</dbReference>
<dbReference type="RefSeq" id="XP_054210944.1">
    <property type="nucleotide sequence ID" value="XM_054354969.1"/>
</dbReference>
<dbReference type="SMR" id="O95865"/>
<dbReference type="BioGRID" id="117107">
    <property type="interactions" value="72"/>
</dbReference>
<dbReference type="FunCoup" id="O95865">
    <property type="interactions" value="655"/>
</dbReference>
<dbReference type="IntAct" id="O95865">
    <property type="interactions" value="50"/>
</dbReference>
<dbReference type="MINT" id="O95865"/>
<dbReference type="STRING" id="9606.ENSP00000364949"/>
<dbReference type="DrugBank" id="DB00155">
    <property type="generic name" value="Citrulline"/>
</dbReference>
<dbReference type="GlyCosmos" id="O95865">
    <property type="glycosylation" value="2 sites, 1 glycan"/>
</dbReference>
<dbReference type="GlyGen" id="O95865">
    <property type="glycosylation" value="5 sites, 1 O-linked glycan (5 sites)"/>
</dbReference>
<dbReference type="iPTMnet" id="O95865"/>
<dbReference type="MetOSite" id="O95865"/>
<dbReference type="PhosphoSitePlus" id="O95865"/>
<dbReference type="SwissPalm" id="O95865"/>
<dbReference type="BioMuta" id="DDAH2"/>
<dbReference type="REPRODUCTION-2DPAGE" id="IPI00000760"/>
<dbReference type="REPRODUCTION-2DPAGE" id="O95865"/>
<dbReference type="jPOST" id="O95865"/>
<dbReference type="MassIVE" id="O95865"/>
<dbReference type="PaxDb" id="9606-ENSP00000364945"/>
<dbReference type="PeptideAtlas" id="O95865"/>
<dbReference type="ProteomicsDB" id="51100"/>
<dbReference type="Pumba" id="O95865"/>
<dbReference type="Antibodypedia" id="27580">
    <property type="antibodies" value="272 antibodies from 33 providers"/>
</dbReference>
<dbReference type="DNASU" id="23564"/>
<dbReference type="Ensembl" id="ENST00000375787.6">
    <property type="protein sequence ID" value="ENSP00000364943.2"/>
    <property type="gene ID" value="ENSG00000213722.10"/>
</dbReference>
<dbReference type="Ensembl" id="ENST00000375789.7">
    <property type="protein sequence ID" value="ENSP00000364945.2"/>
    <property type="gene ID" value="ENSG00000213722.10"/>
</dbReference>
<dbReference type="Ensembl" id="ENST00000375792.7">
    <property type="protein sequence ID" value="ENSP00000364949.3"/>
    <property type="gene ID" value="ENSG00000213722.10"/>
</dbReference>
<dbReference type="Ensembl" id="ENST00000383409.6">
    <property type="protein sequence ID" value="ENSP00000372901.2"/>
    <property type="gene ID" value="ENSG00000206395.8"/>
</dbReference>
<dbReference type="Ensembl" id="ENST00000400062.5">
    <property type="protein sequence ID" value="ENSP00000382935.1"/>
    <property type="gene ID" value="ENSG00000206395.8"/>
</dbReference>
<dbReference type="Ensembl" id="ENST00000400063.7">
    <property type="protein sequence ID" value="ENSP00000382936.3"/>
    <property type="gene ID" value="ENSG00000206395.8"/>
</dbReference>
<dbReference type="Ensembl" id="ENST00000411456.6">
    <property type="protein sequence ID" value="ENSP00000409396.2"/>
    <property type="gene ID" value="ENSG00000226634.6"/>
</dbReference>
<dbReference type="Ensembl" id="ENST00000413532.5">
    <property type="protein sequence ID" value="ENSP00000402594.1"/>
    <property type="gene ID" value="ENSG00000226634.6"/>
</dbReference>
<dbReference type="Ensembl" id="ENST00000413655.5">
    <property type="protein sequence ID" value="ENSP00000412800.1"/>
    <property type="gene ID" value="ENSG00000233076.6"/>
</dbReference>
<dbReference type="Ensembl" id="ENST00000414455.5">
    <property type="protein sequence ID" value="ENSP00000404342.1"/>
    <property type="gene ID" value="ENSG00000225635.7"/>
</dbReference>
<dbReference type="Ensembl" id="ENST00000416410.6">
    <property type="protein sequence ID" value="ENSP00000397466.2"/>
    <property type="gene ID" value="ENSG00000213722.10"/>
</dbReference>
<dbReference type="Ensembl" id="ENST00000424790.5">
    <property type="protein sequence ID" value="ENSP00000391632.1"/>
    <property type="gene ID" value="ENSG00000233076.6"/>
</dbReference>
<dbReference type="Ensembl" id="ENST00000426149.5">
    <property type="protein sequence ID" value="ENSP00000412327.1"/>
    <property type="gene ID" value="ENSG00000228128.6"/>
</dbReference>
<dbReference type="Ensembl" id="ENST00000427126.5">
    <property type="protein sequence ID" value="ENSP00000395372.1"/>
    <property type="gene ID" value="ENSG00000228128.6"/>
</dbReference>
<dbReference type="Ensembl" id="ENST00000430482.5">
    <property type="protein sequence ID" value="ENSP00000408148.1"/>
    <property type="gene ID" value="ENSG00000227317.6"/>
</dbReference>
<dbReference type="Ensembl" id="ENST00000434464.6">
    <property type="protein sequence ID" value="ENSP00000391833.2"/>
    <property type="gene ID" value="ENSG00000228128.6"/>
</dbReference>
<dbReference type="Ensembl" id="ENST00000436437.2">
    <property type="protein sequence ID" value="ENSP00000395759.2"/>
    <property type="gene ID" value="ENSG00000213722.10"/>
</dbReference>
<dbReference type="Ensembl" id="ENST00000437889.6">
    <property type="protein sequence ID" value="ENSP00000399023.2"/>
    <property type="gene ID" value="ENSG00000227317.6"/>
</dbReference>
<dbReference type="Ensembl" id="ENST00000443533.5">
    <property type="protein sequence ID" value="ENSP00000389552.1"/>
    <property type="gene ID" value="ENSG00000226634.6"/>
</dbReference>
<dbReference type="Ensembl" id="ENST00000444699.5">
    <property type="protein sequence ID" value="ENSP00000404851.1"/>
    <property type="gene ID" value="ENSG00000225635.7"/>
</dbReference>
<dbReference type="Ensembl" id="ENST00000447101.6">
    <property type="protein sequence ID" value="ENSP00000405515.2"/>
    <property type="gene ID" value="ENSG00000233076.6"/>
</dbReference>
<dbReference type="Ensembl" id="ENST00000451411.5">
    <property type="protein sequence ID" value="ENSP00000403154.1"/>
    <property type="gene ID" value="ENSG00000227317.6"/>
</dbReference>
<dbReference type="Ensembl" id="ENST00000454138.6">
    <property type="protein sequence ID" value="ENSP00000399357.2"/>
    <property type="gene ID" value="ENSG00000225635.7"/>
</dbReference>
<dbReference type="GeneID" id="23564"/>
<dbReference type="KEGG" id="hsa:23564"/>
<dbReference type="MANE-Select" id="ENST00000375789.7">
    <property type="protein sequence ID" value="ENSP00000364945.2"/>
    <property type="RefSeq nucleotide sequence ID" value="NM_001303007.2"/>
    <property type="RefSeq protein sequence ID" value="NP_001289936.1"/>
</dbReference>
<dbReference type="AGR" id="HGNC:2716"/>
<dbReference type="CTD" id="23564"/>
<dbReference type="DisGeNET" id="23564"/>
<dbReference type="GeneCards" id="DDAH2"/>
<dbReference type="HGNC" id="HGNC:2716">
    <property type="gene designation" value="DDAH2"/>
</dbReference>
<dbReference type="HPA" id="ENSG00000213722">
    <property type="expression patterns" value="Low tissue specificity"/>
</dbReference>
<dbReference type="MIM" id="604744">
    <property type="type" value="gene"/>
</dbReference>
<dbReference type="neXtProt" id="NX_O95865"/>
<dbReference type="OpenTargets" id="ENSG00000213722"/>
<dbReference type="PharmGKB" id="PA27186"/>
<dbReference type="VEuPathDB" id="HostDB:ENSG00000213722"/>
<dbReference type="eggNOG" id="ENOG502QW4J">
    <property type="taxonomic scope" value="Eukaryota"/>
</dbReference>
<dbReference type="GeneTree" id="ENSGT00940000160769"/>
<dbReference type="InParanoid" id="O95865"/>
<dbReference type="OMA" id="DICSMGG"/>
<dbReference type="OrthoDB" id="10016839at2759"/>
<dbReference type="PAN-GO" id="O95865">
    <property type="GO annotations" value="5 GO annotations based on evolutionary models"/>
</dbReference>
<dbReference type="PhylomeDB" id="O95865"/>
<dbReference type="TreeFam" id="TF314737"/>
<dbReference type="BioCyc" id="MetaCyc:HS03493-MONOMER"/>
<dbReference type="BRENDA" id="3.5.3.18">
    <property type="organism ID" value="2681"/>
</dbReference>
<dbReference type="PathwayCommons" id="O95865"/>
<dbReference type="SignaLink" id="O95865"/>
<dbReference type="SIGNOR" id="O95865"/>
<dbReference type="BioGRID-ORCS" id="23564">
    <property type="hits" value="15 hits in 1157 CRISPR screens"/>
</dbReference>
<dbReference type="ChiTaRS" id="DDAH2">
    <property type="organism name" value="human"/>
</dbReference>
<dbReference type="GenomeRNAi" id="23564"/>
<dbReference type="Pharos" id="O95865">
    <property type="development level" value="Tbio"/>
</dbReference>
<dbReference type="PRO" id="PR:O95865"/>
<dbReference type="Proteomes" id="UP000005640">
    <property type="component" value="Chromosome 6"/>
</dbReference>
<dbReference type="RNAct" id="O95865">
    <property type="molecule type" value="protein"/>
</dbReference>
<dbReference type="Bgee" id="ENSG00000213722">
    <property type="expression patterns" value="Expressed in ganglionic eminence and 93 other cell types or tissues"/>
</dbReference>
<dbReference type="ExpressionAtlas" id="O95865">
    <property type="expression patterns" value="baseline and differential"/>
</dbReference>
<dbReference type="GO" id="GO:0070062">
    <property type="term" value="C:extracellular exosome"/>
    <property type="evidence" value="ECO:0007005"/>
    <property type="project" value="UniProtKB"/>
</dbReference>
<dbReference type="GO" id="GO:0005739">
    <property type="term" value="C:mitochondrion"/>
    <property type="evidence" value="ECO:0000314"/>
    <property type="project" value="HPA"/>
</dbReference>
<dbReference type="GO" id="GO:0016787">
    <property type="term" value="F:hydrolase activity"/>
    <property type="evidence" value="ECO:0007669"/>
    <property type="project" value="UniProtKB-KW"/>
</dbReference>
<dbReference type="GO" id="GO:0043066">
    <property type="term" value="P:negative regulation of apoptotic process"/>
    <property type="evidence" value="ECO:0000304"/>
    <property type="project" value="UniProtKB"/>
</dbReference>
<dbReference type="GO" id="GO:0045429">
    <property type="term" value="P:positive regulation of nitric oxide biosynthetic process"/>
    <property type="evidence" value="ECO:0000250"/>
    <property type="project" value="BHF-UCL"/>
</dbReference>
<dbReference type="FunFam" id="3.75.10.10:FF:000004">
    <property type="entry name" value="N(G),N(G)-dimethylarginine dimethylaminohydrolase 1"/>
    <property type="match status" value="1"/>
</dbReference>
<dbReference type="Gene3D" id="3.75.10.10">
    <property type="entry name" value="L-arginine/glycine Amidinotransferase, Chain A"/>
    <property type="match status" value="1"/>
</dbReference>
<dbReference type="InterPro" id="IPR033199">
    <property type="entry name" value="DDAH-like"/>
</dbReference>
<dbReference type="PANTHER" id="PTHR12737">
    <property type="entry name" value="DIMETHYLARGININE DIMETHYLAMINOHYDROLASE"/>
    <property type="match status" value="1"/>
</dbReference>
<dbReference type="PANTHER" id="PTHR12737:SF16">
    <property type="entry name" value="N(G),N(G)-DIMETHYLARGININE DIMETHYLAMINOHYDROLASE 2"/>
    <property type="match status" value="1"/>
</dbReference>
<dbReference type="SUPFAM" id="SSF55909">
    <property type="entry name" value="Pentein"/>
    <property type="match status" value="1"/>
</dbReference>
<name>DDAH2_HUMAN</name>
<accession>O95865</accession>
<accession>A2BEZ7</accession>
<feature type="chain" id="PRO_0000171121" description="Putative hydrolase DDAH2">
    <location>
        <begin position="1"/>
        <end position="285"/>
    </location>
</feature>
<feature type="active site" description="Proton donor" evidence="1">
    <location>
        <position position="171"/>
    </location>
</feature>
<feature type="active site" description="Nucleophile" evidence="1">
    <location>
        <position position="276"/>
    </location>
</feature>
<feature type="mutagenesis site" description="No effect on inhibition of MAVS-mediated innate response activation." evidence="6">
    <original>S</original>
    <variation>D</variation>
    <location>
        <position position="68"/>
    </location>
</feature>
<feature type="mutagenesis site" description="No effect on inhibition of MAVS-mediated innate response activation." evidence="6">
    <original>S</original>
    <variation>D</variation>
    <location>
        <position position="162"/>
    </location>
</feature>
<feature type="mutagenesis site" description="No effect on inhibition of MAVS-mediated innate response activation." evidence="6">
    <original>T</original>
    <variation>D</variation>
    <location>
        <position position="163"/>
    </location>
</feature>
<feature type="mutagenesis site" description="No effect on inhibition of MAVS-mediated innate response activation." evidence="6">
    <original>T</original>
    <variation>D</variation>
    <location>
        <position position="183"/>
    </location>
</feature>
<feature type="mutagenesis site" description="Loss of mitochondrial translocation upon viral infection. Loss of inhibition of MAVS-mediated innate response activation." evidence="6">
    <original>T</original>
    <variation>D</variation>
    <location>
        <position position="203"/>
    </location>
</feature>
<feature type="mutagenesis site" description="No effect on inhibition of MAVS-mediated innate response activation." evidence="6">
    <original>S</original>
    <variation>D</variation>
    <location>
        <position position="209"/>
    </location>
</feature>
<feature type="mutagenesis site" description="Loss of mitochondrial translocation upon viral infection. Loss of inhibition of MAVS-mediated innate response activation." evidence="6">
    <original>T</original>
    <variation>D</variation>
    <location>
        <position position="211"/>
    </location>
</feature>
<feature type="mutagenesis site" description="Loss of mitochondrial translocation upon viral infection. Loss of inhibition of MAVS-mediated innate response activation." evidence="6">
    <original>S</original>
    <variation>D</variation>
    <location>
        <position position="245"/>
    </location>
</feature>
<feature type="mutagenesis site" description="Loss of mitochondrial translocation upon viral infection. Loss of inhibition of MAVS-mediated innate response activation." evidence="6">
    <original>S</original>
    <variation>D</variation>
    <location>
        <position position="253"/>
    </location>
</feature>
<evidence type="ECO:0000250" key="1">
    <source>
        <dbReference type="UniProtKB" id="O94760"/>
    </source>
</evidence>
<evidence type="ECO:0000250" key="2">
    <source>
        <dbReference type="UniProtKB" id="Q99LD8"/>
    </source>
</evidence>
<evidence type="ECO:0000269" key="3">
    <source>
    </source>
</evidence>
<evidence type="ECO:0000269" key="4">
    <source>
    </source>
</evidence>
<evidence type="ECO:0000269" key="5">
    <source>
    </source>
</evidence>
<evidence type="ECO:0000269" key="6">
    <source>
    </source>
</evidence>
<evidence type="ECO:0000269" key="7">
    <source>
    </source>
</evidence>
<evidence type="ECO:0000305" key="8"/>
<evidence type="ECO:0000305" key="9">
    <source>
    </source>
</evidence>
<evidence type="ECO:0000305" key="10">
    <source>
    </source>
</evidence>
<evidence type="ECO:0000305" key="11">
    <source>
    </source>
</evidence>
<evidence type="ECO:0000312" key="12">
    <source>
        <dbReference type="HGNC" id="HGNC:2716"/>
    </source>
</evidence>
<gene>
    <name evidence="12" type="primary">DDAH2</name>
    <name type="synonym">DDAH</name>
    <name type="synonym">G6A</name>
    <name type="synonym">NG30</name>
</gene>
<sequence length="285" mass="29644">MGTPGEGLGRCSHALIRGVPESLASGEGAGAGLPALDLAKAQREHGVLGGKLRQRLGLQLLELPPEESLPLGPLLGDTAVIQGDTALITRPWSPARRPEVDGVRKALQDLGLRIVEIGDENATLDGTDVLFTGREFFVGLSKWTNHRGAEIVADTFRDFAVSTVPVSGPSHLRGLCGMGGPRTVVAGSSDAAQKAVRAMAVLTDHPYASLTLPDDAAADCLFLRPGLPGVPPFLLHRGGGDLPNSQEALQKLSDVTLVPVSCSELEKAGAGLSSLCLVLSTRPHS</sequence>
<protein>
    <recommendedName>
        <fullName evidence="8">Putative hydrolase DDAH2</fullName>
        <ecNumber evidence="8">3.-.-.-</ecNumber>
    </recommendedName>
    <alternativeName>
        <fullName>DDAHII</fullName>
    </alternativeName>
    <alternativeName>
        <fullName evidence="11">Inactive N(G),N(G)-dimethylarginine dimethylaminohydrolase 2</fullName>
        <shortName>DDAH-2</shortName>
        <shortName>Inactive dimethylarginine dimethylaminohydrolase 2</shortName>
    </alternativeName>
    <alternativeName>
        <fullName>Protein G6a</fullName>
    </alternativeName>
    <alternativeName>
        <fullName>S-phase protein</fullName>
    </alternativeName>
</protein>
<proteinExistence type="evidence at protein level"/>